<reference key="1">
    <citation type="journal article" date="2007" name="FASEB J.">
        <title>A novel subfamily of mouse cytosolic carboxypeptidases.</title>
        <authorList>
            <person name="Kalinina E."/>
            <person name="Biswas R."/>
            <person name="Berezniuk I."/>
            <person name="Hermoso A."/>
            <person name="Aviles F.X."/>
            <person name="Fricker L.D."/>
        </authorList>
    </citation>
    <scope>NUCLEOTIDE SEQUENCE [MRNA] (ISOFORMS 1; 2; 3; 4 AND 5)</scope>
    <scope>FUNCTION</scope>
    <scope>SUBCELLULAR LOCATION</scope>
    <scope>TISSUE SPECIFICITY</scope>
    <source>
        <strain>C57BLKS/J</strain>
    </source>
</reference>
<reference key="2">
    <citation type="journal article" date="2005" name="Science">
        <title>The transcriptional landscape of the mammalian genome.</title>
        <authorList>
            <person name="Carninci P."/>
            <person name="Kasukawa T."/>
            <person name="Katayama S."/>
            <person name="Gough J."/>
            <person name="Frith M.C."/>
            <person name="Maeda N."/>
            <person name="Oyama R."/>
            <person name="Ravasi T."/>
            <person name="Lenhard B."/>
            <person name="Wells C."/>
            <person name="Kodzius R."/>
            <person name="Shimokawa K."/>
            <person name="Bajic V.B."/>
            <person name="Brenner S.E."/>
            <person name="Batalov S."/>
            <person name="Forrest A.R."/>
            <person name="Zavolan M."/>
            <person name="Davis M.J."/>
            <person name="Wilming L.G."/>
            <person name="Aidinis V."/>
            <person name="Allen J.E."/>
            <person name="Ambesi-Impiombato A."/>
            <person name="Apweiler R."/>
            <person name="Aturaliya R.N."/>
            <person name="Bailey T.L."/>
            <person name="Bansal M."/>
            <person name="Baxter L."/>
            <person name="Beisel K.W."/>
            <person name="Bersano T."/>
            <person name="Bono H."/>
            <person name="Chalk A.M."/>
            <person name="Chiu K.P."/>
            <person name="Choudhary V."/>
            <person name="Christoffels A."/>
            <person name="Clutterbuck D.R."/>
            <person name="Crowe M.L."/>
            <person name="Dalla E."/>
            <person name="Dalrymple B.P."/>
            <person name="de Bono B."/>
            <person name="Della Gatta G."/>
            <person name="di Bernardo D."/>
            <person name="Down T."/>
            <person name="Engstrom P."/>
            <person name="Fagiolini M."/>
            <person name="Faulkner G."/>
            <person name="Fletcher C.F."/>
            <person name="Fukushima T."/>
            <person name="Furuno M."/>
            <person name="Futaki S."/>
            <person name="Gariboldi M."/>
            <person name="Georgii-Hemming P."/>
            <person name="Gingeras T.R."/>
            <person name="Gojobori T."/>
            <person name="Green R.E."/>
            <person name="Gustincich S."/>
            <person name="Harbers M."/>
            <person name="Hayashi Y."/>
            <person name="Hensch T.K."/>
            <person name="Hirokawa N."/>
            <person name="Hill D."/>
            <person name="Huminiecki L."/>
            <person name="Iacono M."/>
            <person name="Ikeo K."/>
            <person name="Iwama A."/>
            <person name="Ishikawa T."/>
            <person name="Jakt M."/>
            <person name="Kanapin A."/>
            <person name="Katoh M."/>
            <person name="Kawasawa Y."/>
            <person name="Kelso J."/>
            <person name="Kitamura H."/>
            <person name="Kitano H."/>
            <person name="Kollias G."/>
            <person name="Krishnan S.P."/>
            <person name="Kruger A."/>
            <person name="Kummerfeld S.K."/>
            <person name="Kurochkin I.V."/>
            <person name="Lareau L.F."/>
            <person name="Lazarevic D."/>
            <person name="Lipovich L."/>
            <person name="Liu J."/>
            <person name="Liuni S."/>
            <person name="McWilliam S."/>
            <person name="Madan Babu M."/>
            <person name="Madera M."/>
            <person name="Marchionni L."/>
            <person name="Matsuda H."/>
            <person name="Matsuzawa S."/>
            <person name="Miki H."/>
            <person name="Mignone F."/>
            <person name="Miyake S."/>
            <person name="Morris K."/>
            <person name="Mottagui-Tabar S."/>
            <person name="Mulder N."/>
            <person name="Nakano N."/>
            <person name="Nakauchi H."/>
            <person name="Ng P."/>
            <person name="Nilsson R."/>
            <person name="Nishiguchi S."/>
            <person name="Nishikawa S."/>
            <person name="Nori F."/>
            <person name="Ohara O."/>
            <person name="Okazaki Y."/>
            <person name="Orlando V."/>
            <person name="Pang K.C."/>
            <person name="Pavan W.J."/>
            <person name="Pavesi G."/>
            <person name="Pesole G."/>
            <person name="Petrovsky N."/>
            <person name="Piazza S."/>
            <person name="Reed J."/>
            <person name="Reid J.F."/>
            <person name="Ring B.Z."/>
            <person name="Ringwald M."/>
            <person name="Rost B."/>
            <person name="Ruan Y."/>
            <person name="Salzberg S.L."/>
            <person name="Sandelin A."/>
            <person name="Schneider C."/>
            <person name="Schoenbach C."/>
            <person name="Sekiguchi K."/>
            <person name="Semple C.A."/>
            <person name="Seno S."/>
            <person name="Sessa L."/>
            <person name="Sheng Y."/>
            <person name="Shibata Y."/>
            <person name="Shimada H."/>
            <person name="Shimada K."/>
            <person name="Silva D."/>
            <person name="Sinclair B."/>
            <person name="Sperling S."/>
            <person name="Stupka E."/>
            <person name="Sugiura K."/>
            <person name="Sultana R."/>
            <person name="Takenaka Y."/>
            <person name="Taki K."/>
            <person name="Tammoja K."/>
            <person name="Tan S.L."/>
            <person name="Tang S."/>
            <person name="Taylor M.S."/>
            <person name="Tegner J."/>
            <person name="Teichmann S.A."/>
            <person name="Ueda H.R."/>
            <person name="van Nimwegen E."/>
            <person name="Verardo R."/>
            <person name="Wei C.L."/>
            <person name="Yagi K."/>
            <person name="Yamanishi H."/>
            <person name="Zabarovsky E."/>
            <person name="Zhu S."/>
            <person name="Zimmer A."/>
            <person name="Hide W."/>
            <person name="Bult C."/>
            <person name="Grimmond S.M."/>
            <person name="Teasdale R.D."/>
            <person name="Liu E.T."/>
            <person name="Brusic V."/>
            <person name="Quackenbush J."/>
            <person name="Wahlestedt C."/>
            <person name="Mattick J.S."/>
            <person name="Hume D.A."/>
            <person name="Kai C."/>
            <person name="Sasaki D."/>
            <person name="Tomaru Y."/>
            <person name="Fukuda S."/>
            <person name="Kanamori-Katayama M."/>
            <person name="Suzuki M."/>
            <person name="Aoki J."/>
            <person name="Arakawa T."/>
            <person name="Iida J."/>
            <person name="Imamura K."/>
            <person name="Itoh M."/>
            <person name="Kato T."/>
            <person name="Kawaji H."/>
            <person name="Kawagashira N."/>
            <person name="Kawashima T."/>
            <person name="Kojima M."/>
            <person name="Kondo S."/>
            <person name="Konno H."/>
            <person name="Nakano K."/>
            <person name="Ninomiya N."/>
            <person name="Nishio T."/>
            <person name="Okada M."/>
            <person name="Plessy C."/>
            <person name="Shibata K."/>
            <person name="Shiraki T."/>
            <person name="Suzuki S."/>
            <person name="Tagami M."/>
            <person name="Waki K."/>
            <person name="Watahiki A."/>
            <person name="Okamura-Oho Y."/>
            <person name="Suzuki H."/>
            <person name="Kawai J."/>
            <person name="Hayashizaki Y."/>
        </authorList>
    </citation>
    <scope>NUCLEOTIDE SEQUENCE [LARGE SCALE MRNA] (ISOFORMS 1; 3; 6 AND 7)</scope>
    <source>
        <strain>C57BL/6J</strain>
        <tissue>Testis</tissue>
        <tissue>Thymus</tissue>
    </source>
</reference>
<reference key="3">
    <citation type="journal article" date="2009" name="PLoS Biol.">
        <title>Lineage-specific biology revealed by a finished genome assembly of the mouse.</title>
        <authorList>
            <person name="Church D.M."/>
            <person name="Goodstadt L."/>
            <person name="Hillier L.W."/>
            <person name="Zody M.C."/>
            <person name="Goldstein S."/>
            <person name="She X."/>
            <person name="Bult C.J."/>
            <person name="Agarwala R."/>
            <person name="Cherry J.L."/>
            <person name="DiCuccio M."/>
            <person name="Hlavina W."/>
            <person name="Kapustin Y."/>
            <person name="Meric P."/>
            <person name="Maglott D."/>
            <person name="Birtle Z."/>
            <person name="Marques A.C."/>
            <person name="Graves T."/>
            <person name="Zhou S."/>
            <person name="Teague B."/>
            <person name="Potamousis K."/>
            <person name="Churas C."/>
            <person name="Place M."/>
            <person name="Herschleb J."/>
            <person name="Runnheim R."/>
            <person name="Forrest D."/>
            <person name="Amos-Landgraf J."/>
            <person name="Schwartz D.C."/>
            <person name="Cheng Z."/>
            <person name="Lindblad-Toh K."/>
            <person name="Eichler E.E."/>
            <person name="Ponting C.P."/>
        </authorList>
    </citation>
    <scope>NUCLEOTIDE SEQUENCE [LARGE SCALE GENOMIC DNA]</scope>
    <source>
        <strain>C57BL/6J</strain>
    </source>
</reference>
<reference key="4">
    <citation type="journal article" date="2014" name="Mol. Biol. Cell">
        <title>The cytosolic carboxypeptidases CCP2 and CCP3 catalyze posttranslational removal of acidic amino acids.</title>
        <authorList>
            <person name="Tort O."/>
            <person name="Tanco S."/>
            <person name="Rocha C."/>
            <person name="Bieche I."/>
            <person name="Seixas C."/>
            <person name="Bosc C."/>
            <person name="Andrieux A."/>
            <person name="Moutin M.J."/>
            <person name="Aviles F.X."/>
            <person name="Lorenzo J."/>
            <person name="Janke C."/>
        </authorList>
    </citation>
    <scope>FUNCTION</scope>
    <scope>CATALYTIC ACTIVITY</scope>
    <scope>TISSUE SPECIFICITY</scope>
    <scope>INDUCTION</scope>
    <scope>DISRUPTION PHENOTYPE</scope>
    <scope>MUTAGENESIS OF GLU-593</scope>
</reference>
<evidence type="ECO:0000250" key="1"/>
<evidence type="ECO:0000250" key="2">
    <source>
        <dbReference type="UniProtKB" id="Q5U5Z8"/>
    </source>
</evidence>
<evidence type="ECO:0000255" key="3">
    <source>
        <dbReference type="PROSITE-ProRule" id="PRU01379"/>
    </source>
</evidence>
<evidence type="ECO:0000256" key="4">
    <source>
        <dbReference type="SAM" id="MobiDB-lite"/>
    </source>
</evidence>
<evidence type="ECO:0000269" key="5">
    <source>
    </source>
</evidence>
<evidence type="ECO:0000269" key="6">
    <source>
    </source>
</evidence>
<evidence type="ECO:0000303" key="7">
    <source>
    </source>
</evidence>
<evidence type="ECO:0000303" key="8">
    <source>
    </source>
</evidence>
<evidence type="ECO:0000303" key="9">
    <source>
    </source>
</evidence>
<evidence type="ECO:0000305" key="10"/>
<evidence type="ECO:0000305" key="11">
    <source>
    </source>
</evidence>
<evidence type="ECO:0000312" key="12">
    <source>
        <dbReference type="MGI" id="MGI:2443254"/>
    </source>
</evidence>
<keyword id="KW-0025">Alternative splicing</keyword>
<keyword id="KW-0121">Carboxypeptidase</keyword>
<keyword id="KW-0966">Cell projection</keyword>
<keyword id="KW-0963">Cytoplasm</keyword>
<keyword id="KW-0206">Cytoskeleton</keyword>
<keyword id="KW-0378">Hydrolase</keyword>
<keyword id="KW-0479">Metal-binding</keyword>
<keyword id="KW-0482">Metalloprotease</keyword>
<keyword id="KW-0645">Protease</keyword>
<keyword id="KW-1185">Reference proteome</keyword>
<keyword id="KW-0862">Zinc</keyword>
<sequence>MNVLLEMAFLSQTLPDPYEDFIHHHLQYYGYFKAQKSSLPNSGTHQRVWRNSPRYMLNGSFGERDDFISDSLEKEMLLWPTCLSSTGHAHIDAVNRDSLLLSSPLLRTRQLIFDELDEASPRLREPRELFSCFSSRGPLQAPRWPIECEVIKENIHHIEWVPHQPEYFYQPTGSEKVPEIVGEEQGTVVYQLDSVPAEGTYFTSSRIGGKRGTIKELAVTLQGPDDNTLLFESRFESGNLQKAVRVGIYEYELTLRTDLYTDKHTQWFYFRVQNTRKDATYRFTIVNLLKPKSLYAVGMKPLMYSQLDATIYNIGWRREGREIKYYKNNVDDGQQPLYCLTWTTQFPHDQDTCFFAHFYPYTYTDLQCYLLSVANNPIQSQFCKLRALCRSLAGNTVYLLTITNPSRTPQEAAAKKAVVLSARVHPGESNSSWIMNGFLDFILSNSPDAQLLRDIFVFKVIPMLNPDGVIVGNYRCSLAGRDLNRHYKTVLKDSFPCIWYTKNMIKRLLEEREVLLYCDFHGHSRKNNIFLYGCHSNNRKHWLHERVFPLMLSKNAPDKFSFDSCNFKVQKCKEGTGRVVMWRMGIINSYTMESTFGGSTLGSKRDTHFTIEDLKSLGYHVCDTLLDFCDPDQTKYTQCLQELKELLQQEINKKLNNFGQDMDLEGNWSDIPLSDIESSTSGSDSSLSDGPPIRLLNIVADEPNQKTVLKNPKKKRLQTRKQRNEQYQKSYLMRELKLTENAPGRARFVSTLQKQPTFLKSPESPSPSVRRSENPRLNETQLSGREKGTSLDPPLTSPKNKERIQSKKPGFTASCSPKRSTNSSLGPAPDVKPNWSKTRYSATRKDHATMAVYPSLHIYTYP</sequence>
<accession>Q8CDK2</accession>
<accession>A2AH35</accession>
<accession>Q09M08</accession>
<accession>Q09M09</accession>
<accession>Q09M10</accession>
<accession>Q09M11</accession>
<accession>Q09M12</accession>
<accession>Q8C529</accession>
<accession>Q8C9X4</accession>
<accession>Q8CDE6</accession>
<accession>Q8CDF6</accession>
<accession>Q8CDQ1</accession>
<dbReference type="EC" id="3.4.17.-" evidence="6"/>
<dbReference type="EMBL" id="DQ867026">
    <property type="protein sequence ID" value="ABI51945.1"/>
    <property type="status" value="ALT_INIT"/>
    <property type="molecule type" value="mRNA"/>
</dbReference>
<dbReference type="EMBL" id="DQ867027">
    <property type="protein sequence ID" value="ABI51946.1"/>
    <property type="status" value="ALT_INIT"/>
    <property type="molecule type" value="mRNA"/>
</dbReference>
<dbReference type="EMBL" id="DQ867028">
    <property type="protein sequence ID" value="ABI51947.1"/>
    <property type="status" value="ALT_INIT"/>
    <property type="molecule type" value="mRNA"/>
</dbReference>
<dbReference type="EMBL" id="DQ867029">
    <property type="protein sequence ID" value="ABI51948.1"/>
    <property type="status" value="ALT_INIT"/>
    <property type="molecule type" value="mRNA"/>
</dbReference>
<dbReference type="EMBL" id="DQ867030">
    <property type="protein sequence ID" value="ABI51949.1"/>
    <property type="status" value="ALT_INIT"/>
    <property type="molecule type" value="mRNA"/>
</dbReference>
<dbReference type="EMBL" id="AK029744">
    <property type="protein sequence ID" value="BAC26594.1"/>
    <property type="molecule type" value="mRNA"/>
</dbReference>
<dbReference type="EMBL" id="AK029932">
    <property type="protein sequence ID" value="BAC26686.1"/>
    <property type="molecule type" value="mRNA"/>
</dbReference>
<dbReference type="EMBL" id="AK030138">
    <property type="protein sequence ID" value="BAC26802.1"/>
    <property type="molecule type" value="mRNA"/>
</dbReference>
<dbReference type="EMBL" id="AK030182">
    <property type="protein sequence ID" value="BAC26827.1"/>
    <property type="molecule type" value="mRNA"/>
</dbReference>
<dbReference type="EMBL" id="AK040259">
    <property type="protein sequence ID" value="BAC30555.2"/>
    <property type="molecule type" value="mRNA"/>
</dbReference>
<dbReference type="EMBL" id="AK079691">
    <property type="protein sequence ID" value="BAC37726.2"/>
    <property type="status" value="ALT_INIT"/>
    <property type="molecule type" value="mRNA"/>
</dbReference>
<dbReference type="EMBL" id="AL714026">
    <property type="protein sequence ID" value="CAM20823.1"/>
    <property type="status" value="ALT_SEQ"/>
    <property type="molecule type" value="Genomic_DNA"/>
</dbReference>
<dbReference type="EMBL" id="AL714026">
    <property type="protein sequence ID" value="CAM20824.1"/>
    <property type="molecule type" value="Genomic_DNA"/>
</dbReference>
<dbReference type="EMBL" id="AL714026">
    <property type="protein sequence ID" value="CAM20825.1"/>
    <property type="molecule type" value="Genomic_DNA"/>
</dbReference>
<dbReference type="CCDS" id="CCDS38177.2">
    <molecule id="Q8CDK2-1"/>
</dbReference>
<dbReference type="CCDS" id="CCDS89512.1">
    <molecule id="Q8CDK2-6"/>
</dbReference>
<dbReference type="RefSeq" id="NP_001343462.1">
    <molecule id="Q8CDK2-6"/>
    <property type="nucleotide sequence ID" value="NM_001356533.1"/>
</dbReference>
<dbReference type="RefSeq" id="NP_848870.2">
    <molecule id="Q8CDK2-1"/>
    <property type="nucleotide sequence ID" value="NM_178755.4"/>
</dbReference>
<dbReference type="RefSeq" id="XP_006499695.1">
    <molecule id="Q8CDK2-1"/>
    <property type="nucleotide sequence ID" value="XM_006499632.2"/>
</dbReference>
<dbReference type="RefSeq" id="XP_006499703.1">
    <molecule id="Q8CDK2-4"/>
    <property type="nucleotide sequence ID" value="XM_006499640.1"/>
</dbReference>
<dbReference type="RefSeq" id="XP_006499704.1">
    <property type="nucleotide sequence ID" value="XM_006499641.3"/>
</dbReference>
<dbReference type="RefSeq" id="XP_006499705.1">
    <molecule id="Q8CDK2-2"/>
    <property type="nucleotide sequence ID" value="XM_006499642.3"/>
</dbReference>
<dbReference type="RefSeq" id="XP_006499706.1">
    <molecule id="Q8CDK2-5"/>
    <property type="nucleotide sequence ID" value="XM_006499643.1"/>
</dbReference>
<dbReference type="RefSeq" id="XP_011237881.1">
    <molecule id="Q8CDK2-5"/>
    <property type="nucleotide sequence ID" value="XM_011239579.3"/>
</dbReference>
<dbReference type="RefSeq" id="XP_036018157.1">
    <molecule id="Q8CDK2-4"/>
    <property type="nucleotide sequence ID" value="XM_036162264.1"/>
</dbReference>
<dbReference type="SMR" id="Q8CDK2"/>
<dbReference type="FunCoup" id="Q8CDK2">
    <property type="interactions" value="312"/>
</dbReference>
<dbReference type="STRING" id="10090.ENSMUSP00000129216"/>
<dbReference type="MEROPS" id="M14.029"/>
<dbReference type="GlyGen" id="Q8CDK2">
    <property type="glycosylation" value="2 sites, 1 O-linked glycan (2 sites)"/>
</dbReference>
<dbReference type="iPTMnet" id="Q8CDK2"/>
<dbReference type="PhosphoSitePlus" id="Q8CDK2"/>
<dbReference type="SwissPalm" id="Q8CDK2"/>
<dbReference type="jPOST" id="Q8CDK2"/>
<dbReference type="PaxDb" id="10090-ENSMUSP00000129216"/>
<dbReference type="ProteomicsDB" id="283690">
    <molecule id="Q8CDK2-1"/>
</dbReference>
<dbReference type="ProteomicsDB" id="283691">
    <molecule id="Q8CDK2-2"/>
</dbReference>
<dbReference type="ProteomicsDB" id="283692">
    <molecule id="Q8CDK2-3"/>
</dbReference>
<dbReference type="ProteomicsDB" id="283693">
    <molecule id="Q8CDK2-4"/>
</dbReference>
<dbReference type="ProteomicsDB" id="283694">
    <molecule id="Q8CDK2-5"/>
</dbReference>
<dbReference type="ProteomicsDB" id="283695">
    <molecule id="Q8CDK2-6"/>
</dbReference>
<dbReference type="ProteomicsDB" id="283696">
    <molecule id="Q8CDK2-7"/>
</dbReference>
<dbReference type="Antibodypedia" id="1166">
    <property type="antibodies" value="120 antibodies from 23 providers"/>
</dbReference>
<dbReference type="DNASU" id="271813"/>
<dbReference type="Ensembl" id="ENSMUST00000037206.11">
    <molecule id="Q8CDK2-6"/>
    <property type="protein sequence ID" value="ENSMUSP00000047936.5"/>
    <property type="gene ID" value="ENSMUSG00000040812.15"/>
</dbReference>
<dbReference type="Ensembl" id="ENSMUST00000037219.12">
    <molecule id="Q8CDK2-1"/>
    <property type="protein sequence ID" value="ENSMUSP00000048647.6"/>
    <property type="gene ID" value="ENSMUSG00000040812.15"/>
</dbReference>
<dbReference type="Ensembl" id="ENSMUST00000051831.13">
    <molecule id="Q8CDK2-3"/>
    <property type="protein sequence ID" value="ENSMUSP00000051620.7"/>
    <property type="gene ID" value="ENSMUSG00000040812.15"/>
</dbReference>
<dbReference type="Ensembl" id="ENSMUST00000111481.2">
    <molecule id="Q8CDK2-1"/>
    <property type="protein sequence ID" value="ENSMUSP00000107106.2"/>
    <property type="gene ID" value="ENSMUSG00000040812.15"/>
</dbReference>
<dbReference type="Ensembl" id="ENSMUST00000170320.8">
    <molecule id="Q8CDK2-1"/>
    <property type="protein sequence ID" value="ENSMUSP00000129216.2"/>
    <property type="gene ID" value="ENSMUSG00000040812.15"/>
</dbReference>
<dbReference type="GeneID" id="271813"/>
<dbReference type="KEGG" id="mmu:271813"/>
<dbReference type="UCSC" id="uc008ktc.2">
    <molecule id="Q8CDK2-6"/>
    <property type="organism name" value="mouse"/>
</dbReference>
<dbReference type="UCSC" id="uc008ktd.2">
    <molecule id="Q8CDK2-2"/>
    <property type="organism name" value="mouse"/>
</dbReference>
<dbReference type="UCSC" id="uc008kte.2">
    <molecule id="Q8CDK2-1"/>
    <property type="organism name" value="mouse"/>
</dbReference>
<dbReference type="UCSC" id="uc008ktg.2">
    <molecule id="Q8CDK2-4"/>
    <property type="organism name" value="mouse"/>
</dbReference>
<dbReference type="UCSC" id="uc008kth.2">
    <molecule id="Q8CDK2-5"/>
    <property type="organism name" value="mouse"/>
</dbReference>
<dbReference type="UCSC" id="uc008ktk.1">
    <molecule id="Q8CDK2-7"/>
    <property type="organism name" value="mouse"/>
</dbReference>
<dbReference type="AGR" id="MGI:2443254"/>
<dbReference type="CTD" id="79841"/>
<dbReference type="MGI" id="MGI:2443254">
    <property type="gene designation" value="Agbl2"/>
</dbReference>
<dbReference type="VEuPathDB" id="HostDB:ENSMUSG00000040812"/>
<dbReference type="eggNOG" id="KOG3641">
    <property type="taxonomic scope" value="Eukaryota"/>
</dbReference>
<dbReference type="GeneTree" id="ENSGT00940000160201"/>
<dbReference type="InParanoid" id="Q8CDK2"/>
<dbReference type="OMA" id="KGRMQVL"/>
<dbReference type="OrthoDB" id="10253041at2759"/>
<dbReference type="PhylomeDB" id="Q8CDK2"/>
<dbReference type="TreeFam" id="TF313794"/>
<dbReference type="BioGRID-ORCS" id="271813">
    <property type="hits" value="0 hits in 77 CRISPR screens"/>
</dbReference>
<dbReference type="ChiTaRS" id="Agbl2">
    <property type="organism name" value="mouse"/>
</dbReference>
<dbReference type="PRO" id="PR:Q8CDK2"/>
<dbReference type="Proteomes" id="UP000000589">
    <property type="component" value="Chromosome 2"/>
</dbReference>
<dbReference type="RNAct" id="Q8CDK2">
    <property type="molecule type" value="protein"/>
</dbReference>
<dbReference type="Bgee" id="ENSMUSG00000040812">
    <property type="expression patterns" value="Expressed in spermatocyte and 43 other cell types or tissues"/>
</dbReference>
<dbReference type="ExpressionAtlas" id="Q8CDK2">
    <property type="expression patterns" value="baseline and differential"/>
</dbReference>
<dbReference type="GO" id="GO:0005814">
    <property type="term" value="C:centriole"/>
    <property type="evidence" value="ECO:0000250"/>
    <property type="project" value="UniProtKB"/>
</dbReference>
<dbReference type="GO" id="GO:0036064">
    <property type="term" value="C:ciliary basal body"/>
    <property type="evidence" value="ECO:0000250"/>
    <property type="project" value="UniProtKB"/>
</dbReference>
<dbReference type="GO" id="GO:0005829">
    <property type="term" value="C:cytosol"/>
    <property type="evidence" value="ECO:0000314"/>
    <property type="project" value="UniProtKB"/>
</dbReference>
<dbReference type="GO" id="GO:0004181">
    <property type="term" value="F:metallocarboxypeptidase activity"/>
    <property type="evidence" value="ECO:0000314"/>
    <property type="project" value="UniProtKB"/>
</dbReference>
<dbReference type="GO" id="GO:0008270">
    <property type="term" value="F:zinc ion binding"/>
    <property type="evidence" value="ECO:0007669"/>
    <property type="project" value="InterPro"/>
</dbReference>
<dbReference type="GO" id="GO:0035610">
    <property type="term" value="P:protein side chain deglutamylation"/>
    <property type="evidence" value="ECO:0000314"/>
    <property type="project" value="UniProtKB"/>
</dbReference>
<dbReference type="GO" id="GO:0006508">
    <property type="term" value="P:proteolysis"/>
    <property type="evidence" value="ECO:0007669"/>
    <property type="project" value="UniProtKB-KW"/>
</dbReference>
<dbReference type="CDD" id="cd06907">
    <property type="entry name" value="M14_AGBL2-3_like"/>
    <property type="match status" value="1"/>
</dbReference>
<dbReference type="FunFam" id="2.60.40.3120:FF:000001">
    <property type="entry name" value="cytosolic carboxypeptidase 1 isoform X1"/>
    <property type="match status" value="1"/>
</dbReference>
<dbReference type="FunFam" id="3.40.630.10:FF:000011">
    <property type="entry name" value="cytosolic carboxypeptidase 2 isoform X1"/>
    <property type="match status" value="1"/>
</dbReference>
<dbReference type="Gene3D" id="2.60.40.3120">
    <property type="match status" value="1"/>
</dbReference>
<dbReference type="Gene3D" id="3.40.630.10">
    <property type="entry name" value="Zn peptidases"/>
    <property type="match status" value="1"/>
</dbReference>
<dbReference type="InterPro" id="IPR050821">
    <property type="entry name" value="Cytosolic_carboxypeptidase"/>
</dbReference>
<dbReference type="InterPro" id="IPR040626">
    <property type="entry name" value="Pepdidase_M14_N"/>
</dbReference>
<dbReference type="InterPro" id="IPR000834">
    <property type="entry name" value="Peptidase_M14"/>
</dbReference>
<dbReference type="PANTHER" id="PTHR12756">
    <property type="entry name" value="CYTOSOLIC CARBOXYPEPTIDASE"/>
    <property type="match status" value="1"/>
</dbReference>
<dbReference type="PANTHER" id="PTHR12756:SF41">
    <property type="entry name" value="CYTOSOLIC CARBOXYPEPTIDASE 2"/>
    <property type="match status" value="1"/>
</dbReference>
<dbReference type="Pfam" id="PF18027">
    <property type="entry name" value="Pepdidase_M14_N"/>
    <property type="match status" value="1"/>
</dbReference>
<dbReference type="Pfam" id="PF00246">
    <property type="entry name" value="Peptidase_M14"/>
    <property type="match status" value="1"/>
</dbReference>
<dbReference type="SUPFAM" id="SSF53187">
    <property type="entry name" value="Zn-dependent exopeptidases"/>
    <property type="match status" value="1"/>
</dbReference>
<dbReference type="PROSITE" id="PS52035">
    <property type="entry name" value="PEPTIDASE_M14"/>
    <property type="match status" value="1"/>
</dbReference>
<proteinExistence type="evidence at protein level"/>
<gene>
    <name evidence="12" type="primary">Agbl2</name>
    <name evidence="9" type="synonym">Ccp2</name>
</gene>
<name>CBPC2_MOUSE</name>
<protein>
    <recommendedName>
        <fullName evidence="9">Cytosolic carboxypeptidase 2</fullName>
        <ecNumber evidence="6">3.4.17.-</ecNumber>
    </recommendedName>
    <alternativeName>
        <fullName>ATP/GTP-binding protein-like 2</fullName>
    </alternativeName>
    <alternativeName>
        <fullName evidence="10">Protein deglutamylase CCP2</fullName>
    </alternativeName>
</protein>
<feature type="chain" id="PRO_0000283750" description="Cytosolic carboxypeptidase 2">
    <location>
        <begin position="1"/>
        <end position="862"/>
    </location>
</feature>
<feature type="domain" description="Peptidase M14" evidence="3">
    <location>
        <begin position="359"/>
        <end position="629"/>
    </location>
</feature>
<feature type="region of interest" description="Disordered" evidence="4">
    <location>
        <begin position="669"/>
        <end position="692"/>
    </location>
</feature>
<feature type="region of interest" description="Disordered" evidence="4">
    <location>
        <begin position="704"/>
        <end position="728"/>
    </location>
</feature>
<feature type="region of interest" description="Disordered" evidence="4">
    <location>
        <begin position="750"/>
        <end position="836"/>
    </location>
</feature>
<feature type="compositionally biased region" description="Low complexity" evidence="4">
    <location>
        <begin position="674"/>
        <end position="689"/>
    </location>
</feature>
<feature type="compositionally biased region" description="Basic residues" evidence="4">
    <location>
        <begin position="711"/>
        <end position="721"/>
    </location>
</feature>
<feature type="compositionally biased region" description="Polar residues" evidence="4">
    <location>
        <begin position="813"/>
        <end position="825"/>
    </location>
</feature>
<feature type="active site" description="Proton donor/acceptor" evidence="3">
    <location>
        <position position="593"/>
    </location>
</feature>
<feature type="binding site" evidence="3">
    <location>
        <position position="425"/>
    </location>
    <ligand>
        <name>Zn(2+)</name>
        <dbReference type="ChEBI" id="CHEBI:29105"/>
        <note>catalytic</note>
    </ligand>
</feature>
<feature type="binding site" evidence="3">
    <location>
        <position position="428"/>
    </location>
    <ligand>
        <name>Zn(2+)</name>
        <dbReference type="ChEBI" id="CHEBI:29105"/>
        <note>catalytic</note>
    </ligand>
</feature>
<feature type="binding site" evidence="3">
    <location>
        <position position="521"/>
    </location>
    <ligand>
        <name>Zn(2+)</name>
        <dbReference type="ChEBI" id="CHEBI:29105"/>
        <note>catalytic</note>
    </ligand>
</feature>
<feature type="splice variant" id="VSP_024362" description="In isoform 7." evidence="7">
    <location>
        <begin position="1"/>
        <end position="298"/>
    </location>
</feature>
<feature type="splice variant" id="VSP_024363" description="In isoform 6." evidence="7">
    <original>NVLLEMAFLSQ</original>
    <variation>FPALETELKPE</variation>
    <location>
        <begin position="2"/>
        <end position="12"/>
    </location>
</feature>
<feature type="splice variant" id="VSP_024364" description="In isoform 5." evidence="8">
    <original>WPTCLSSTGHAHIDAVNRD</original>
    <variation>Y</variation>
    <location>
        <begin position="79"/>
        <end position="97"/>
    </location>
</feature>
<feature type="splice variant" id="VSP_024365" description="In isoform 4 and isoform 5." evidence="8">
    <location>
        <begin position="744"/>
        <end position="779"/>
    </location>
</feature>
<feature type="splice variant" id="VSP_024366" description="In isoform 2 and isoform 6." evidence="7 8">
    <original>SKKP</original>
    <variation>GFST</variation>
    <location>
        <begin position="806"/>
        <end position="809"/>
    </location>
</feature>
<feature type="splice variant" id="VSP_024367" description="In isoform 3 and isoform 7." evidence="7 8">
    <original>KKPGFTASCSPKRSTNSSLGPAPDVKPNWS</original>
    <variation>YSQPCVFSLILHEHQAQTSSDTPCQNPESH</variation>
    <location>
        <begin position="807"/>
        <end position="836"/>
    </location>
</feature>
<feature type="splice variant" id="VSP_024368" description="In isoform 2 and isoform 6." evidence="7 8">
    <location>
        <begin position="810"/>
        <end position="862"/>
    </location>
</feature>
<feature type="splice variant" id="VSP_024369" description="In isoform 3 and isoform 7." evidence="7 8">
    <location>
        <begin position="837"/>
        <end position="862"/>
    </location>
</feature>
<feature type="mutagenesis site" description="Abolishes deglutamylase activity." evidence="6">
    <original>E</original>
    <variation>A</variation>
    <location>
        <position position="593"/>
    </location>
</feature>
<feature type="sequence conflict" description="In Ref. 2; BAC26827." evidence="10" ref="2">
    <original>S</original>
    <variation>F</variation>
    <location>
        <position position="134"/>
    </location>
</feature>
<feature type="sequence conflict" description="In Ref. 2; BAC26827." evidence="10" ref="2">
    <original>I</original>
    <variation>L</variation>
    <location>
        <position position="146"/>
    </location>
</feature>
<feature type="sequence conflict" description="In Ref. 2; BAC26827." evidence="10" ref="2">
    <original>R</original>
    <variation>T</variation>
    <location>
        <position position="206"/>
    </location>
</feature>
<feature type="sequence conflict" description="In Ref. 2; BAC26827." evidence="10" ref="2">
    <original>V</original>
    <variation>F</variation>
    <location>
        <position position="749"/>
    </location>
</feature>
<comment type="function">
    <text evidence="6">Metallocarboxypeptidase that mediates deglutamylation of tubulin and non-tubulin target proteins (PubMed:25103237). Catalyzes the removal of polyglutamate side chains present on the gamma-carboxyl group of glutamate residues within the C-terminal tail of tubulin protein (PubMed:25103237). Specifically cleaves tubulin long-side-chains, while it is not able to remove the branching point glutamate (PubMed:25103237). Also catalyzes the removal of polyglutamate residues from the carboxy-terminus of non-tubulin proteins such as MYLK (PubMed:25103237).</text>
</comment>
<comment type="catalytic activity">
    <reaction evidence="6">
        <text>(L-glutamyl)(n+1)-gamma-L-glutamyl-L-glutamyl-[protein] + H2O = (L-glutamyl)(n)-gamma-L-glutamyl-L-glutamyl-[protein] + L-glutamate</text>
        <dbReference type="Rhea" id="RHEA:60004"/>
        <dbReference type="Rhea" id="RHEA-COMP:15519"/>
        <dbReference type="Rhea" id="RHEA-COMP:15675"/>
        <dbReference type="ChEBI" id="CHEBI:15377"/>
        <dbReference type="ChEBI" id="CHEBI:29985"/>
        <dbReference type="ChEBI" id="CHEBI:143623"/>
    </reaction>
    <physiologicalReaction direction="left-to-right" evidence="11">
        <dbReference type="Rhea" id="RHEA:60005"/>
    </physiologicalReaction>
</comment>
<comment type="cofactor">
    <cofactor evidence="1">
        <name>Zn(2+)</name>
        <dbReference type="ChEBI" id="CHEBI:29105"/>
    </cofactor>
    <text evidence="1">Binds 1 zinc ion per subunit.</text>
</comment>
<comment type="activity regulation">
    <text evidence="1">Inhibited by RARRES1.</text>
</comment>
<comment type="subunit">
    <text evidence="2">Interacts with RARRES1, KIF11 and MAPRE1.</text>
</comment>
<comment type="subcellular location">
    <subcellularLocation>
        <location evidence="5">Cytoplasm</location>
        <location evidence="5">Cytosol</location>
    </subcellularLocation>
    <subcellularLocation>
        <location evidence="2">Cytoplasm</location>
        <location evidence="2">Cytoskeleton</location>
        <location evidence="2">Microtubule organizing center</location>
        <location evidence="2">Centrosome</location>
        <location evidence="2">Centriole</location>
    </subcellularLocation>
    <subcellularLocation>
        <location evidence="2">Cytoplasm</location>
        <location evidence="2">Cytoskeleton</location>
        <location evidence="2">Cilium basal body</location>
    </subcellularLocation>
    <text evidence="2">Colocalizes with gamma-tubulin in the centrioles and with glutamylated tubulin in the basal bodies of ciliated cells.</text>
</comment>
<comment type="alternative products">
    <event type="alternative splicing"/>
    <isoform>
        <id>Q8CDK2-1</id>
        <name>1</name>
        <sequence type="displayed"/>
    </isoform>
    <isoform>
        <id>Q8CDK2-2</id>
        <name>2</name>
        <sequence type="described" ref="VSP_024366 VSP_024368"/>
    </isoform>
    <isoform>
        <id>Q8CDK2-3</id>
        <name>3</name>
        <sequence type="described" ref="VSP_024367 VSP_024369"/>
    </isoform>
    <isoform>
        <id>Q8CDK2-4</id>
        <name>4</name>
        <sequence type="described" ref="VSP_024365"/>
    </isoform>
    <isoform>
        <id>Q8CDK2-5</id>
        <name>5</name>
        <sequence type="described" ref="VSP_024364 VSP_024365"/>
    </isoform>
    <isoform>
        <id>Q8CDK2-6</id>
        <name>6</name>
        <sequence type="described" ref="VSP_024363 VSP_024366 VSP_024368"/>
    </isoform>
    <isoform>
        <id>Q8CDK2-7</id>
        <name>7</name>
        <sequence type="described" ref="VSP_024362 VSP_024367 VSP_024369"/>
    </isoform>
</comment>
<comment type="tissue specificity">
    <text evidence="5 6">Widely expressed. Expressed in tissues with motile cilia such as testis, lung and trachea. Also detected in brain, eye, muscle, pancreas, intestine, stomach, pituitary, spleen, adrenal and kidney. Expressed in mitral and granular cells in brain.</text>
</comment>
<comment type="induction">
    <text evidence="6">Up-regulated during ciliogenesis.</text>
</comment>
<comment type="disruption phenotype">
    <text evidence="6">AGBL2 and AGBL3 double mutants are viable and display no obvious phenotypic alterations.</text>
</comment>
<comment type="miscellaneous">
    <molecule>Isoform 3</molecule>
    <text evidence="10">May be produced at very low levels due to a premature stop codon in the mRNA, leading to nonsense-mediated mRNA decay.</text>
</comment>
<comment type="similarity">
    <text evidence="10">Belongs to the peptidase M14 family.</text>
</comment>
<comment type="caution">
    <text evidence="2 6">Was initially shown to catalyze the removal of carboxy-terminus tyrosine from alpha-tubulin (By similarity). However, later studies did not identified any detyrosinase or deglycylase activities from the carboxy-terminus of tubulin (PubMed:25103237).</text>
</comment>
<comment type="caution">
    <text evidence="2">Was originally thought to have detyrosinating activity from C-terminal positions on tubulin.</text>
</comment>
<comment type="sequence caution" evidence="10">
    <conflict type="erroneous initiation">
        <sequence resource="EMBL-CDS" id="ABI51945"/>
    </conflict>
    <text>Truncated N-terminus.</text>
</comment>
<comment type="sequence caution" evidence="10">
    <conflict type="erroneous initiation">
        <sequence resource="EMBL-CDS" id="ABI51946"/>
    </conflict>
    <text>Truncated N-terminus.</text>
</comment>
<comment type="sequence caution" evidence="10">
    <conflict type="erroneous initiation">
        <sequence resource="EMBL-CDS" id="ABI51947"/>
    </conflict>
    <text>Truncated N-terminus.</text>
</comment>
<comment type="sequence caution" evidence="10">
    <conflict type="erroneous initiation">
        <sequence resource="EMBL-CDS" id="ABI51948"/>
    </conflict>
    <text>Truncated N-terminus.</text>
</comment>
<comment type="sequence caution" evidence="10">
    <conflict type="erroneous initiation">
        <sequence resource="EMBL-CDS" id="ABI51949"/>
    </conflict>
    <text>Truncated N-terminus.</text>
</comment>
<comment type="sequence caution" evidence="10">
    <conflict type="erroneous initiation">
        <sequence resource="EMBL-CDS" id="BAC37726"/>
    </conflict>
    <text>Truncated N-terminus.</text>
</comment>
<comment type="sequence caution" evidence="10">
    <conflict type="erroneous gene model prediction">
        <sequence resource="EMBL-CDS" id="CAM20823"/>
    </conflict>
</comment>
<organism>
    <name type="scientific">Mus musculus</name>
    <name type="common">Mouse</name>
    <dbReference type="NCBI Taxonomy" id="10090"/>
    <lineage>
        <taxon>Eukaryota</taxon>
        <taxon>Metazoa</taxon>
        <taxon>Chordata</taxon>
        <taxon>Craniata</taxon>
        <taxon>Vertebrata</taxon>
        <taxon>Euteleostomi</taxon>
        <taxon>Mammalia</taxon>
        <taxon>Eutheria</taxon>
        <taxon>Euarchontoglires</taxon>
        <taxon>Glires</taxon>
        <taxon>Rodentia</taxon>
        <taxon>Myomorpha</taxon>
        <taxon>Muroidea</taxon>
        <taxon>Muridae</taxon>
        <taxon>Murinae</taxon>
        <taxon>Mus</taxon>
        <taxon>Mus</taxon>
    </lineage>
</organism>